<sequence length="247" mass="27775">MWRTKTLESMLCSPMKCSSSNIGGSYAQSSKEVSNTTKREVHLPPCSSIMHAPLTPEINQAALPPPAYHYAPSSLHQTEDPVWRSSPNSIIFSPVIATPQPFPLTFVERQSCCPIYSTAASSYTAQSVPPSMQHFQEENHRAVSNEQYSLPNVHIGQNPGTLLSQTQTDLDLIQKQLRAVVKLRKQCPICGKVCSRPSTLRTHYLIHTGDTPFKCTWEHCNKSFNVKSNMLRHLRTHQKKIAKKKHQ</sequence>
<accession>Q12531</accession>
<accession>D6W425</accession>
<accession>Q6Q5F4</accession>
<organism>
    <name type="scientific">Saccharomyces cerevisiae (strain ATCC 204508 / S288c)</name>
    <name type="common">Baker's yeast</name>
    <dbReference type="NCBI Taxonomy" id="559292"/>
    <lineage>
        <taxon>Eukaryota</taxon>
        <taxon>Fungi</taxon>
        <taxon>Dikarya</taxon>
        <taxon>Ascomycota</taxon>
        <taxon>Saccharomycotina</taxon>
        <taxon>Saccharomycetes</taxon>
        <taxon>Saccharomycetales</taxon>
        <taxon>Saccharomycetaceae</taxon>
        <taxon>Saccharomyces</taxon>
    </lineage>
</organism>
<gene>
    <name type="ordered locus">YPR015C</name>
    <name type="ORF">LPZ14c</name>
</gene>
<evidence type="ECO:0000255" key="1">
    <source>
        <dbReference type="PROSITE-ProRule" id="PRU00042"/>
    </source>
</evidence>
<evidence type="ECO:0000305" key="2"/>
<feature type="chain" id="PRO_0000255975" description="Zinc finger protein YPR015C">
    <location>
        <begin position="1"/>
        <end position="247"/>
    </location>
</feature>
<feature type="zinc finger region" description="C2H2-type 1" evidence="1">
    <location>
        <begin position="185"/>
        <end position="207"/>
    </location>
</feature>
<feature type="zinc finger region" description="C2H2-type 2" evidence="1">
    <location>
        <begin position="213"/>
        <end position="237"/>
    </location>
</feature>
<feature type="sequence conflict" description="In Ref. 3; AAS56467." evidence="2" ref="3">
    <original>R</original>
    <variation>W</variation>
    <location>
        <position position="184"/>
    </location>
</feature>
<protein>
    <recommendedName>
        <fullName>Zinc finger protein YPR015C</fullName>
    </recommendedName>
</protein>
<reference key="1">
    <citation type="journal article" date="1997" name="Nature">
        <title>The nucleotide sequence of Saccharomyces cerevisiae chromosome XVI.</title>
        <authorList>
            <person name="Bussey H."/>
            <person name="Storms R.K."/>
            <person name="Ahmed A."/>
            <person name="Albermann K."/>
            <person name="Allen E."/>
            <person name="Ansorge W."/>
            <person name="Araujo R."/>
            <person name="Aparicio A."/>
            <person name="Barrell B.G."/>
            <person name="Badcock K."/>
            <person name="Benes V."/>
            <person name="Botstein D."/>
            <person name="Bowman S."/>
            <person name="Brueckner M."/>
            <person name="Carpenter J."/>
            <person name="Cherry J.M."/>
            <person name="Chung E."/>
            <person name="Churcher C.M."/>
            <person name="Coster F."/>
            <person name="Davis K."/>
            <person name="Davis R.W."/>
            <person name="Dietrich F.S."/>
            <person name="Delius H."/>
            <person name="DiPaolo T."/>
            <person name="Dubois E."/>
            <person name="Duesterhoeft A."/>
            <person name="Duncan M."/>
            <person name="Floeth M."/>
            <person name="Fortin N."/>
            <person name="Friesen J.D."/>
            <person name="Fritz C."/>
            <person name="Goffeau A."/>
            <person name="Hall J."/>
            <person name="Hebling U."/>
            <person name="Heumann K."/>
            <person name="Hilbert H."/>
            <person name="Hillier L.W."/>
            <person name="Hunicke-Smith S."/>
            <person name="Hyman R.W."/>
            <person name="Johnston M."/>
            <person name="Kalman S."/>
            <person name="Kleine K."/>
            <person name="Komp C."/>
            <person name="Kurdi O."/>
            <person name="Lashkari D."/>
            <person name="Lew H."/>
            <person name="Lin A."/>
            <person name="Lin D."/>
            <person name="Louis E.J."/>
            <person name="Marathe R."/>
            <person name="Messenguy F."/>
            <person name="Mewes H.-W."/>
            <person name="Mirtipati S."/>
            <person name="Moestl D."/>
            <person name="Mueller-Auer S."/>
            <person name="Namath A."/>
            <person name="Nentwich U."/>
            <person name="Oefner P."/>
            <person name="Pearson D."/>
            <person name="Petel F.X."/>
            <person name="Pohl T.M."/>
            <person name="Purnelle B."/>
            <person name="Rajandream M.A."/>
            <person name="Rechmann S."/>
            <person name="Rieger M."/>
            <person name="Riles L."/>
            <person name="Roberts D."/>
            <person name="Schaefer M."/>
            <person name="Scharfe M."/>
            <person name="Scherens B."/>
            <person name="Schramm S."/>
            <person name="Schroeder M."/>
            <person name="Sdicu A.-M."/>
            <person name="Tettelin H."/>
            <person name="Urrestarazu L.A."/>
            <person name="Ushinsky S."/>
            <person name="Vierendeels F."/>
            <person name="Vissers S."/>
            <person name="Voss H."/>
            <person name="Walsh S.V."/>
            <person name="Wambutt R."/>
            <person name="Wang Y."/>
            <person name="Wedler E."/>
            <person name="Wedler H."/>
            <person name="Winnett E."/>
            <person name="Zhong W.-W."/>
            <person name="Zollner A."/>
            <person name="Vo D.H."/>
            <person name="Hani J."/>
        </authorList>
    </citation>
    <scope>NUCLEOTIDE SEQUENCE [LARGE SCALE GENOMIC DNA]</scope>
    <source>
        <strain>ATCC 204508 / S288c</strain>
    </source>
</reference>
<reference key="2">
    <citation type="journal article" date="2014" name="G3 (Bethesda)">
        <title>The reference genome sequence of Saccharomyces cerevisiae: Then and now.</title>
        <authorList>
            <person name="Engel S.R."/>
            <person name="Dietrich F.S."/>
            <person name="Fisk D.G."/>
            <person name="Binkley G."/>
            <person name="Balakrishnan R."/>
            <person name="Costanzo M.C."/>
            <person name="Dwight S.S."/>
            <person name="Hitz B.C."/>
            <person name="Karra K."/>
            <person name="Nash R.S."/>
            <person name="Weng S."/>
            <person name="Wong E.D."/>
            <person name="Lloyd P."/>
            <person name="Skrzypek M.S."/>
            <person name="Miyasato S.R."/>
            <person name="Simison M."/>
            <person name="Cherry J.M."/>
        </authorList>
    </citation>
    <scope>GENOME REANNOTATION</scope>
    <source>
        <strain>ATCC 204508 / S288c</strain>
    </source>
</reference>
<reference key="3">
    <citation type="journal article" date="2007" name="Genome Res.">
        <title>Approaching a complete repository of sequence-verified protein-encoding clones for Saccharomyces cerevisiae.</title>
        <authorList>
            <person name="Hu Y."/>
            <person name="Rolfs A."/>
            <person name="Bhullar B."/>
            <person name="Murthy T.V.S."/>
            <person name="Zhu C."/>
            <person name="Berger M.F."/>
            <person name="Camargo A.A."/>
            <person name="Kelley F."/>
            <person name="McCarron S."/>
            <person name="Jepson D."/>
            <person name="Richardson A."/>
            <person name="Raphael J."/>
            <person name="Moreira D."/>
            <person name="Taycher E."/>
            <person name="Zuo D."/>
            <person name="Mohr S."/>
            <person name="Kane M.F."/>
            <person name="Williamson J."/>
            <person name="Simpson A.J.G."/>
            <person name="Bulyk M.L."/>
            <person name="Harlow E."/>
            <person name="Marsischky G."/>
            <person name="Kolodner R.D."/>
            <person name="LaBaer J."/>
        </authorList>
    </citation>
    <scope>NUCLEOTIDE SEQUENCE [GENOMIC DNA]</scope>
    <source>
        <strain>ATCC 204508 / S288c</strain>
    </source>
</reference>
<reference key="4">
    <citation type="journal article" date="1997" name="Nucleic Acids Res.">
        <title>Variations of the C2H2 zinc finger motif in the yeast genome and classification of yeast zinc finger proteins.</title>
        <authorList>
            <person name="Boehm S."/>
            <person name="Frishman D."/>
            <person name="Mewes H.-W."/>
        </authorList>
    </citation>
    <scope>DOMAIN</scope>
</reference>
<keyword id="KW-0479">Metal-binding</keyword>
<keyword id="KW-1185">Reference proteome</keyword>
<keyword id="KW-0677">Repeat</keyword>
<keyword id="KW-0862">Zinc</keyword>
<keyword id="KW-0863">Zinc-finger</keyword>
<proteinExistence type="predicted"/>
<name>YP015_YEAST</name>
<dbReference type="EMBL" id="U31900">
    <property type="protein sequence ID" value="AAA97593.1"/>
    <property type="molecule type" value="Genomic_DNA"/>
</dbReference>
<dbReference type="EMBL" id="Z49919">
    <property type="protein sequence ID" value="CAA90159.1"/>
    <property type="molecule type" value="Genomic_DNA"/>
</dbReference>
<dbReference type="EMBL" id="Z71255">
    <property type="protein sequence ID" value="CAA95011.1"/>
    <property type="molecule type" value="Genomic_DNA"/>
</dbReference>
<dbReference type="EMBL" id="AY558141">
    <property type="protein sequence ID" value="AAS56467.1"/>
    <property type="molecule type" value="Genomic_DNA"/>
</dbReference>
<dbReference type="EMBL" id="BK006949">
    <property type="protein sequence ID" value="DAA11441.1"/>
    <property type="molecule type" value="Genomic_DNA"/>
</dbReference>
<dbReference type="PIR" id="S57548">
    <property type="entry name" value="S57548"/>
</dbReference>
<dbReference type="RefSeq" id="NP_015340.1">
    <property type="nucleotide sequence ID" value="NM_001184112.1"/>
</dbReference>
<dbReference type="SMR" id="Q12531"/>
<dbReference type="BioGRID" id="36192">
    <property type="interactions" value="65"/>
</dbReference>
<dbReference type="DIP" id="DIP-6487N"/>
<dbReference type="FunCoup" id="Q12531">
    <property type="interactions" value="466"/>
</dbReference>
<dbReference type="IntAct" id="Q12531">
    <property type="interactions" value="11"/>
</dbReference>
<dbReference type="MINT" id="Q12531"/>
<dbReference type="STRING" id="4932.YPR015C"/>
<dbReference type="PaxDb" id="4932-YPR015C"/>
<dbReference type="PeptideAtlas" id="Q12531"/>
<dbReference type="EnsemblFungi" id="YPR015C_mRNA">
    <property type="protein sequence ID" value="YPR015C"/>
    <property type="gene ID" value="YPR015C"/>
</dbReference>
<dbReference type="GeneID" id="856125"/>
<dbReference type="KEGG" id="sce:YPR015C"/>
<dbReference type="AGR" id="SGD:S000006219"/>
<dbReference type="SGD" id="S000006219">
    <property type="gene designation" value="YPR015C"/>
</dbReference>
<dbReference type="VEuPathDB" id="FungiDB:YPR015C"/>
<dbReference type="eggNOG" id="KOG1721">
    <property type="taxonomic scope" value="Eukaryota"/>
</dbReference>
<dbReference type="GeneTree" id="ENSGT00940000176618"/>
<dbReference type="HOGENOM" id="CLU_1116285_0_0_1"/>
<dbReference type="InParanoid" id="Q12531"/>
<dbReference type="OMA" id="QEENHRA"/>
<dbReference type="OrthoDB" id="6077919at2759"/>
<dbReference type="BioCyc" id="YEAST:G3O-34175-MONOMER"/>
<dbReference type="BioGRID-ORCS" id="856125">
    <property type="hits" value="1 hit in 13 CRISPR screens"/>
</dbReference>
<dbReference type="PRO" id="PR:Q12531"/>
<dbReference type="Proteomes" id="UP000002311">
    <property type="component" value="Chromosome XVI"/>
</dbReference>
<dbReference type="RNAct" id="Q12531">
    <property type="molecule type" value="protein"/>
</dbReference>
<dbReference type="GO" id="GO:0008270">
    <property type="term" value="F:zinc ion binding"/>
    <property type="evidence" value="ECO:0007669"/>
    <property type="project" value="UniProtKB-KW"/>
</dbReference>
<dbReference type="GO" id="GO:0000077">
    <property type="term" value="P:DNA damage checkpoint signaling"/>
    <property type="evidence" value="ECO:0000315"/>
    <property type="project" value="SGD"/>
</dbReference>
<dbReference type="FunFam" id="3.30.160.60:FF:000065">
    <property type="entry name" value="B-cell CLL/lymphoma 6, member B"/>
    <property type="match status" value="1"/>
</dbReference>
<dbReference type="Gene3D" id="3.30.160.60">
    <property type="entry name" value="Classic Zinc Finger"/>
    <property type="match status" value="2"/>
</dbReference>
<dbReference type="InterPro" id="IPR036236">
    <property type="entry name" value="Znf_C2H2_sf"/>
</dbReference>
<dbReference type="InterPro" id="IPR013087">
    <property type="entry name" value="Znf_C2H2_type"/>
</dbReference>
<dbReference type="PANTHER" id="PTHR14003:SF20">
    <property type="entry name" value="FINGER DOMAIN PROTEIN, PUTATIVE (AFU_ORTHOLOGUE AFUA_4G10380)-RELATED"/>
    <property type="match status" value="1"/>
</dbReference>
<dbReference type="PANTHER" id="PTHR14003">
    <property type="entry name" value="TRANSCRIPTIONAL REPRESSOR PROTEIN YY"/>
    <property type="match status" value="1"/>
</dbReference>
<dbReference type="Pfam" id="PF00096">
    <property type="entry name" value="zf-C2H2"/>
    <property type="match status" value="2"/>
</dbReference>
<dbReference type="SMART" id="SM00355">
    <property type="entry name" value="ZnF_C2H2"/>
    <property type="match status" value="2"/>
</dbReference>
<dbReference type="SUPFAM" id="SSF57667">
    <property type="entry name" value="beta-beta-alpha zinc fingers"/>
    <property type="match status" value="1"/>
</dbReference>
<dbReference type="PROSITE" id="PS00028">
    <property type="entry name" value="ZINC_FINGER_C2H2_1"/>
    <property type="match status" value="2"/>
</dbReference>
<dbReference type="PROSITE" id="PS50157">
    <property type="entry name" value="ZINC_FINGER_C2H2_2"/>
    <property type="match status" value="2"/>
</dbReference>